<name>RBFA_BACHK</name>
<accession>Q6HF04</accession>
<comment type="function">
    <text evidence="1">One of several proteins that assist in the late maturation steps of the functional core of the 30S ribosomal subunit. Associates with free 30S ribosomal subunits (but not with 30S subunits that are part of 70S ribosomes or polysomes). Required for efficient processing of 16S rRNA. May interact with the 5'-terminal helix region of 16S rRNA.</text>
</comment>
<comment type="subunit">
    <text evidence="1">Monomer. Binds 30S ribosomal subunits, but not 50S ribosomal subunits or 70S ribosomes.</text>
</comment>
<comment type="subcellular location">
    <subcellularLocation>
        <location evidence="1">Cytoplasm</location>
    </subcellularLocation>
</comment>
<comment type="similarity">
    <text evidence="1">Belongs to the RbfA family.</text>
</comment>
<proteinExistence type="inferred from homology"/>
<sequence>MKLRANRVGEQMKKELGDIISRKIKDPRVGFVTVTDVQVSGDLQIATVYISVLGDEEQKENTLKGLAKAKGFIRSEIGQRIRLRKTPEISFEFDESIGYGHRIDTLLHQINKDGKREE</sequence>
<reference key="1">
    <citation type="journal article" date="2006" name="J. Bacteriol.">
        <title>Pathogenomic sequence analysis of Bacillus cereus and Bacillus thuringiensis isolates closely related to Bacillus anthracis.</title>
        <authorList>
            <person name="Han C.S."/>
            <person name="Xie G."/>
            <person name="Challacombe J.F."/>
            <person name="Altherr M.R."/>
            <person name="Bhotika S.S."/>
            <person name="Bruce D."/>
            <person name="Campbell C.S."/>
            <person name="Campbell M.L."/>
            <person name="Chen J."/>
            <person name="Chertkov O."/>
            <person name="Cleland C."/>
            <person name="Dimitrijevic M."/>
            <person name="Doggett N.A."/>
            <person name="Fawcett J.J."/>
            <person name="Glavina T."/>
            <person name="Goodwin L.A."/>
            <person name="Hill K.K."/>
            <person name="Hitchcock P."/>
            <person name="Jackson P.J."/>
            <person name="Keim P."/>
            <person name="Kewalramani A.R."/>
            <person name="Longmire J."/>
            <person name="Lucas S."/>
            <person name="Malfatti S."/>
            <person name="McMurry K."/>
            <person name="Meincke L.J."/>
            <person name="Misra M."/>
            <person name="Moseman B.L."/>
            <person name="Mundt M."/>
            <person name="Munk A.C."/>
            <person name="Okinaka R.T."/>
            <person name="Parson-Quintana B."/>
            <person name="Reilly L.P."/>
            <person name="Richardson P."/>
            <person name="Robinson D.L."/>
            <person name="Rubin E."/>
            <person name="Saunders E."/>
            <person name="Tapia R."/>
            <person name="Tesmer J.G."/>
            <person name="Thayer N."/>
            <person name="Thompson L.S."/>
            <person name="Tice H."/>
            <person name="Ticknor L.O."/>
            <person name="Wills P.L."/>
            <person name="Brettin T.S."/>
            <person name="Gilna P."/>
        </authorList>
    </citation>
    <scope>NUCLEOTIDE SEQUENCE [LARGE SCALE GENOMIC DNA]</scope>
    <source>
        <strain>97-27</strain>
    </source>
</reference>
<protein>
    <recommendedName>
        <fullName evidence="1">Ribosome-binding factor A</fullName>
    </recommendedName>
</protein>
<gene>
    <name evidence="1" type="primary">rbfA</name>
    <name type="ordered locus">BT9727_3552</name>
</gene>
<feature type="chain" id="PRO_0000102618" description="Ribosome-binding factor A">
    <location>
        <begin position="1"/>
        <end position="118"/>
    </location>
</feature>
<organism>
    <name type="scientific">Bacillus thuringiensis subsp. konkukian (strain 97-27)</name>
    <dbReference type="NCBI Taxonomy" id="281309"/>
    <lineage>
        <taxon>Bacteria</taxon>
        <taxon>Bacillati</taxon>
        <taxon>Bacillota</taxon>
        <taxon>Bacilli</taxon>
        <taxon>Bacillales</taxon>
        <taxon>Bacillaceae</taxon>
        <taxon>Bacillus</taxon>
        <taxon>Bacillus cereus group</taxon>
    </lineage>
</organism>
<dbReference type="EMBL" id="AE017355">
    <property type="protein sequence ID" value="AAT60592.1"/>
    <property type="molecule type" value="Genomic_DNA"/>
</dbReference>
<dbReference type="RefSeq" id="WP_000776442.1">
    <property type="nucleotide sequence ID" value="NC_005957.1"/>
</dbReference>
<dbReference type="RefSeq" id="YP_037872.1">
    <property type="nucleotide sequence ID" value="NC_005957.1"/>
</dbReference>
<dbReference type="SMR" id="Q6HF04"/>
<dbReference type="KEGG" id="btk:BT9727_3552"/>
<dbReference type="PATRIC" id="fig|281309.8.peg.3789"/>
<dbReference type="HOGENOM" id="CLU_089475_6_3_9"/>
<dbReference type="Proteomes" id="UP000001301">
    <property type="component" value="Chromosome"/>
</dbReference>
<dbReference type="GO" id="GO:0005829">
    <property type="term" value="C:cytosol"/>
    <property type="evidence" value="ECO:0007669"/>
    <property type="project" value="TreeGrafter"/>
</dbReference>
<dbReference type="GO" id="GO:0043024">
    <property type="term" value="F:ribosomal small subunit binding"/>
    <property type="evidence" value="ECO:0007669"/>
    <property type="project" value="TreeGrafter"/>
</dbReference>
<dbReference type="GO" id="GO:0030490">
    <property type="term" value="P:maturation of SSU-rRNA"/>
    <property type="evidence" value="ECO:0007669"/>
    <property type="project" value="UniProtKB-UniRule"/>
</dbReference>
<dbReference type="FunFam" id="3.30.300.20:FF:000009">
    <property type="entry name" value="Ribosome-binding factor A"/>
    <property type="match status" value="1"/>
</dbReference>
<dbReference type="Gene3D" id="3.30.300.20">
    <property type="match status" value="1"/>
</dbReference>
<dbReference type="HAMAP" id="MF_00003">
    <property type="entry name" value="RbfA"/>
    <property type="match status" value="1"/>
</dbReference>
<dbReference type="InterPro" id="IPR015946">
    <property type="entry name" value="KH_dom-like_a/b"/>
</dbReference>
<dbReference type="InterPro" id="IPR000238">
    <property type="entry name" value="RbfA"/>
</dbReference>
<dbReference type="InterPro" id="IPR023799">
    <property type="entry name" value="RbfA_dom_sf"/>
</dbReference>
<dbReference type="InterPro" id="IPR020053">
    <property type="entry name" value="Ribosome-bd_factorA_CS"/>
</dbReference>
<dbReference type="NCBIfam" id="TIGR00082">
    <property type="entry name" value="rbfA"/>
    <property type="match status" value="1"/>
</dbReference>
<dbReference type="PANTHER" id="PTHR33515">
    <property type="entry name" value="RIBOSOME-BINDING FACTOR A, CHLOROPLASTIC-RELATED"/>
    <property type="match status" value="1"/>
</dbReference>
<dbReference type="PANTHER" id="PTHR33515:SF1">
    <property type="entry name" value="RIBOSOME-BINDING FACTOR A, CHLOROPLASTIC-RELATED"/>
    <property type="match status" value="1"/>
</dbReference>
<dbReference type="Pfam" id="PF02033">
    <property type="entry name" value="RBFA"/>
    <property type="match status" value="1"/>
</dbReference>
<dbReference type="SUPFAM" id="SSF89919">
    <property type="entry name" value="Ribosome-binding factor A, RbfA"/>
    <property type="match status" value="1"/>
</dbReference>
<dbReference type="PROSITE" id="PS01319">
    <property type="entry name" value="RBFA"/>
    <property type="match status" value="1"/>
</dbReference>
<evidence type="ECO:0000255" key="1">
    <source>
        <dbReference type="HAMAP-Rule" id="MF_00003"/>
    </source>
</evidence>
<keyword id="KW-0963">Cytoplasm</keyword>
<keyword id="KW-0690">Ribosome biogenesis</keyword>